<name>Y1414_ACTP7</name>
<sequence>MVQWKTLTKRSQGANFEQKAREFLERNGLKFIAANQQFKCGELDLIMRQGDTFVFVEVRQRKSNRFGSAVESIDYRKQQKWLDAANMWLFTRHKQSLDTANCRFDVVAFEGNDPPLWIPNFLG</sequence>
<organism>
    <name type="scientific">Actinobacillus pleuropneumoniae serotype 7 (strain AP76)</name>
    <dbReference type="NCBI Taxonomy" id="537457"/>
    <lineage>
        <taxon>Bacteria</taxon>
        <taxon>Pseudomonadati</taxon>
        <taxon>Pseudomonadota</taxon>
        <taxon>Gammaproteobacteria</taxon>
        <taxon>Pasteurellales</taxon>
        <taxon>Pasteurellaceae</taxon>
        <taxon>Actinobacillus</taxon>
    </lineage>
</organism>
<proteinExistence type="inferred from homology"/>
<accession>B3GYE2</accession>
<comment type="similarity">
    <text evidence="1">Belongs to the UPF0102 family.</text>
</comment>
<gene>
    <name type="ordered locus">APP7_1414</name>
</gene>
<evidence type="ECO:0000255" key="1">
    <source>
        <dbReference type="HAMAP-Rule" id="MF_00048"/>
    </source>
</evidence>
<protein>
    <recommendedName>
        <fullName evidence="1">UPF0102 protein APP7_1414</fullName>
    </recommendedName>
</protein>
<reference key="1">
    <citation type="submission" date="2008-06" db="EMBL/GenBank/DDBJ databases">
        <title>Genome and proteome analysis of A. pleuropneumoniae serotype 7.</title>
        <authorList>
            <person name="Linke B."/>
            <person name="Buettner F."/>
            <person name="Martinez-Arias R."/>
            <person name="Goesmann A."/>
            <person name="Baltes N."/>
            <person name="Tegetmeyer H."/>
            <person name="Singh M."/>
            <person name="Gerlach G.F."/>
        </authorList>
    </citation>
    <scope>NUCLEOTIDE SEQUENCE [LARGE SCALE GENOMIC DNA]</scope>
    <source>
        <strain>AP76</strain>
    </source>
</reference>
<dbReference type="EMBL" id="CP001091">
    <property type="protein sequence ID" value="ACE62066.1"/>
    <property type="molecule type" value="Genomic_DNA"/>
</dbReference>
<dbReference type="RefSeq" id="WP_005598490.1">
    <property type="nucleotide sequence ID" value="NC_010939.1"/>
</dbReference>
<dbReference type="SMR" id="B3GYE2"/>
<dbReference type="KEGG" id="apa:APP7_1414"/>
<dbReference type="HOGENOM" id="CLU_115353_1_0_6"/>
<dbReference type="Proteomes" id="UP000001226">
    <property type="component" value="Chromosome"/>
</dbReference>
<dbReference type="GO" id="GO:0003676">
    <property type="term" value="F:nucleic acid binding"/>
    <property type="evidence" value="ECO:0007669"/>
    <property type="project" value="InterPro"/>
</dbReference>
<dbReference type="CDD" id="cd20736">
    <property type="entry name" value="PoNe_Nuclease"/>
    <property type="match status" value="1"/>
</dbReference>
<dbReference type="Gene3D" id="3.40.1350.10">
    <property type="match status" value="1"/>
</dbReference>
<dbReference type="HAMAP" id="MF_00048">
    <property type="entry name" value="UPF0102"/>
    <property type="match status" value="1"/>
</dbReference>
<dbReference type="InterPro" id="IPR011335">
    <property type="entry name" value="Restrct_endonuc-II-like"/>
</dbReference>
<dbReference type="InterPro" id="IPR011856">
    <property type="entry name" value="tRNA_endonuc-like_dom_sf"/>
</dbReference>
<dbReference type="InterPro" id="IPR003509">
    <property type="entry name" value="UPF0102_YraN-like"/>
</dbReference>
<dbReference type="NCBIfam" id="NF009150">
    <property type="entry name" value="PRK12497.1-3"/>
    <property type="match status" value="1"/>
</dbReference>
<dbReference type="NCBIfam" id="TIGR00252">
    <property type="entry name" value="YraN family protein"/>
    <property type="match status" value="1"/>
</dbReference>
<dbReference type="PANTHER" id="PTHR34039">
    <property type="entry name" value="UPF0102 PROTEIN YRAN"/>
    <property type="match status" value="1"/>
</dbReference>
<dbReference type="PANTHER" id="PTHR34039:SF1">
    <property type="entry name" value="UPF0102 PROTEIN YRAN"/>
    <property type="match status" value="1"/>
</dbReference>
<dbReference type="Pfam" id="PF02021">
    <property type="entry name" value="UPF0102"/>
    <property type="match status" value="1"/>
</dbReference>
<dbReference type="SUPFAM" id="SSF52980">
    <property type="entry name" value="Restriction endonuclease-like"/>
    <property type="match status" value="1"/>
</dbReference>
<feature type="chain" id="PRO_1000091223" description="UPF0102 protein APP7_1414">
    <location>
        <begin position="1"/>
        <end position="123"/>
    </location>
</feature>